<keyword id="KW-0378">Hydrolase</keyword>
<keyword id="KW-0472">Membrane</keyword>
<keyword id="KW-0645">Protease</keyword>
<keyword id="KW-0964">Secreted</keyword>
<keyword id="KW-0788">Thiol protease</keyword>
<keyword id="KW-0812">Transmembrane</keyword>
<keyword id="KW-1133">Transmembrane helix</keyword>
<keyword id="KW-0833">Ubl conjugation pathway</keyword>
<keyword id="KW-0843">Virulence</keyword>
<reference key="1">
    <citation type="journal article" date="2008" name="Genome Res.">
        <title>Chlamydia trachomatis: genome sequence analysis of lymphogranuloma venereum isolates.</title>
        <authorList>
            <person name="Thomson N.R."/>
            <person name="Holden M.T.G."/>
            <person name="Carder C."/>
            <person name="Lennard N."/>
            <person name="Lockey S.J."/>
            <person name="Marsh P."/>
            <person name="Skipp P."/>
            <person name="O'Connor C.D."/>
            <person name="Goodhead I."/>
            <person name="Norbertzcak H."/>
            <person name="Harris B."/>
            <person name="Ormond D."/>
            <person name="Rance R."/>
            <person name="Quail M.A."/>
            <person name="Parkhill J."/>
            <person name="Stephens R.S."/>
            <person name="Clarke I.N."/>
        </authorList>
    </citation>
    <scope>NUCLEOTIDE SEQUENCE [LARGE SCALE GENOMIC DNA]</scope>
    <source>
        <strain>UCH-1/proctitis</strain>
    </source>
</reference>
<organism>
    <name type="scientific">Chlamydia trachomatis serovar L2b (strain UCH-1/proctitis)</name>
    <dbReference type="NCBI Taxonomy" id="471473"/>
    <lineage>
        <taxon>Bacteria</taxon>
        <taxon>Pseudomonadati</taxon>
        <taxon>Chlamydiota</taxon>
        <taxon>Chlamydiia</taxon>
        <taxon>Chlamydiales</taxon>
        <taxon>Chlamydiaceae</taxon>
        <taxon>Chlamydia/Chlamydophila group</taxon>
        <taxon>Chlamydia</taxon>
    </lineage>
</organism>
<comment type="function">
    <text evidence="1">Effector proteins function to alter host cell physiology and promote bacterial survival in host tissues. This protease possesses deubiquitinating and deneddylating activities (By similarity).</text>
</comment>
<comment type="subcellular location">
    <subcellularLocation>
        <location evidence="1">Secreted</location>
    </subcellularLocation>
    <subcellularLocation>
        <location evidence="1">Host cell</location>
    </subcellularLocation>
    <subcellularLocation>
        <location evidence="1">Membrane</location>
        <topology evidence="1">Single-pass membrane protein</topology>
    </subcellularLocation>
    <text evidence="1">Secreted, and delivered into the host cell.</text>
</comment>
<comment type="similarity">
    <text evidence="4">Belongs to the peptidase C48 family.</text>
</comment>
<sequence length="403" mass="45195">MLSPTNSTSKTAPVPPRDSSKPVLISEEPRNQLLQKVARTALAVLLVVVTLGLILLFYSFSDLQSFPWCCQTHPSTKEQPTISIPVPLPSPPLAVPRPSTPPAPTPAISRPSTPSAPKPSTPPPLLPKAPKPVKTQENLFPLVPEQVFVEMYEDMARRRIIEALVPAWDSDIIFKCLCYFHTLYPGLIPLETFPPATIFNFKQKIISILEDKKAVLRGEPIKGSLPICCSKENYRRHLQGTTLLPMFMWYHPTPKTLADTMQTMKQLAIKGSVGASHWLLVIVDIQARRLVYFDSLYNYVMPPEDMKKDLQSLAQQLDQVYPARNGQKFSVKIAAKEVIQKDSGFSCGAWCCQFLYWYLRDPFTDALNDLPVDSVERHENLASFVQACEAAVQDLPELSWPEA</sequence>
<feature type="chain" id="PRO_0000396494" description="Deubiquitinase and deneddylase Dub1">
    <location>
        <begin position="1"/>
        <end position="403"/>
    </location>
</feature>
<feature type="transmembrane region" description="Helical" evidence="2">
    <location>
        <begin position="40"/>
        <end position="60"/>
    </location>
</feature>
<feature type="region of interest" description="Disordered" evidence="3">
    <location>
        <begin position="1"/>
        <end position="24"/>
    </location>
</feature>
<feature type="region of interest" description="Disordered" evidence="3">
    <location>
        <begin position="77"/>
        <end position="132"/>
    </location>
</feature>
<feature type="compositionally biased region" description="Polar residues" evidence="3">
    <location>
        <begin position="1"/>
        <end position="11"/>
    </location>
</feature>
<feature type="compositionally biased region" description="Pro residues" evidence="3">
    <location>
        <begin position="86"/>
        <end position="105"/>
    </location>
</feature>
<feature type="compositionally biased region" description="Pro residues" evidence="3">
    <location>
        <begin position="114"/>
        <end position="130"/>
    </location>
</feature>
<feature type="active site" evidence="2">
    <location>
        <position position="277"/>
    </location>
</feature>
<feature type="active site" evidence="2">
    <location>
        <position position="294"/>
    </location>
</feature>
<feature type="active site" evidence="2">
    <location>
        <position position="347"/>
    </location>
</feature>
<accession>B0BAX9</accession>
<protein>
    <recommendedName>
        <fullName>Deubiquitinase and deneddylase Dub1</fullName>
        <shortName>ChlaDub1</shortName>
        <ecNumber>3.4.22.-</ecNumber>
    </recommendedName>
</protein>
<name>CDUB1_CHLTB</name>
<evidence type="ECO:0000250" key="1"/>
<evidence type="ECO:0000255" key="2"/>
<evidence type="ECO:0000256" key="3">
    <source>
        <dbReference type="SAM" id="MobiDB-lite"/>
    </source>
</evidence>
<evidence type="ECO:0000305" key="4"/>
<gene>
    <name type="primary">cdu1</name>
    <name type="ordered locus">CTLon_0243</name>
</gene>
<dbReference type="EC" id="3.4.22.-"/>
<dbReference type="EMBL" id="AM884177">
    <property type="protein sequence ID" value="CAP06641.1"/>
    <property type="molecule type" value="Genomic_DNA"/>
</dbReference>
<dbReference type="RefSeq" id="WP_012263576.1">
    <property type="nucleotide sequence ID" value="NC_010280.2"/>
</dbReference>
<dbReference type="SMR" id="B0BAX9"/>
<dbReference type="MEROPS" id="C48.032"/>
<dbReference type="KEGG" id="ctl:CTLon_0243"/>
<dbReference type="HOGENOM" id="CLU_067510_0_0_0"/>
<dbReference type="Proteomes" id="UP001154401">
    <property type="component" value="Chromosome"/>
</dbReference>
<dbReference type="GO" id="GO:0005576">
    <property type="term" value="C:extracellular region"/>
    <property type="evidence" value="ECO:0000250"/>
    <property type="project" value="UniProtKB"/>
</dbReference>
<dbReference type="GO" id="GO:0043657">
    <property type="term" value="C:host cell"/>
    <property type="evidence" value="ECO:0007669"/>
    <property type="project" value="UniProtKB-SubCell"/>
</dbReference>
<dbReference type="GO" id="GO:0016020">
    <property type="term" value="C:membrane"/>
    <property type="evidence" value="ECO:0007669"/>
    <property type="project" value="UniProtKB-SubCell"/>
</dbReference>
<dbReference type="GO" id="GO:0004843">
    <property type="term" value="F:cysteine-type deubiquitinase activity"/>
    <property type="evidence" value="ECO:0000250"/>
    <property type="project" value="UniProtKB"/>
</dbReference>
<dbReference type="GO" id="GO:0019784">
    <property type="term" value="F:deNEDDylase activity"/>
    <property type="evidence" value="ECO:0000250"/>
    <property type="project" value="UniProtKB"/>
</dbReference>
<dbReference type="GO" id="GO:0000338">
    <property type="term" value="P:protein deneddylation"/>
    <property type="evidence" value="ECO:0000250"/>
    <property type="project" value="UniProtKB"/>
</dbReference>
<dbReference type="GO" id="GO:0016579">
    <property type="term" value="P:protein deubiquitination"/>
    <property type="evidence" value="ECO:0000250"/>
    <property type="project" value="UniProtKB"/>
</dbReference>
<dbReference type="GO" id="GO:0006508">
    <property type="term" value="P:proteolysis"/>
    <property type="evidence" value="ECO:0007669"/>
    <property type="project" value="UniProtKB-KW"/>
</dbReference>
<dbReference type="Gene3D" id="3.40.395.10">
    <property type="entry name" value="Adenoviral Proteinase, Chain A"/>
    <property type="match status" value="1"/>
</dbReference>
<dbReference type="InterPro" id="IPR038765">
    <property type="entry name" value="Papain-like_cys_pep_sf"/>
</dbReference>
<dbReference type="InterPro" id="IPR003653">
    <property type="entry name" value="Peptidase_C48_C"/>
</dbReference>
<dbReference type="Pfam" id="PF02902">
    <property type="entry name" value="Peptidase_C48"/>
    <property type="match status" value="1"/>
</dbReference>
<dbReference type="SUPFAM" id="SSF54001">
    <property type="entry name" value="Cysteine proteinases"/>
    <property type="match status" value="1"/>
</dbReference>
<proteinExistence type="inferred from homology"/>